<proteinExistence type="inferred from homology"/>
<sequence length="658" mass="75163">MERQFEIVSAYSPQGDQPVAIEKLVEGINSGKKKQVLLGATGTGKTFTISNVIKEVQKPTLVMAHNKTLAGQLYSELKDFFPNNAVEYFVSYYDYYQPEAYVPQTDTFIEKDAQINDEIDKLRHSATSALFERDDVIIVASVSCIYGLGSPEEYRELVVSLRVGMEKDRNQLLRELVDVQYGRNDIDFKRGTFRVRGDVVEIFPASLDEHCIRIEFFGDEIDRIREVNALTGEVLAERDHVAIFPASHFVTREEKMKVAIENIEKELEERLKELNDNGKLLEAQRIEQRTRYDLEMMREMGFCSGIENYSRHLTLRPAGATPYTLLDYFPKDFLIVMDESHVSVPQVRAMYNGDQARKQVLVDHGFRLPSALDNRPLTFDEFEEKTNQVIYVSATPGPYELEQSPEVIEQIIRPTGLLDPPIDIRPIEGQIDDLLGEIQDRIAKNERVLITTLTKKMSEDLTDYLKDVGIKVNYLHSEVKTLERIEIIRDLRLGKFDVLVGINLLREGLDIPEVSLVAILDADKEGFLRSERSLIQTIGRAARNENGRVIMYADRITRSMGIAIEETKRRRSIQEAYNEEHGITPKTIQKGVRDVIRATTAAEEPETYEATPAKKMTKKEREKTIAKMEAEMKEAAKALDFERAAELRDLLLELKAEG</sequence>
<accession>Q81X47</accession>
<accession>Q6HQY3</accession>
<accession>Q6KKA2</accession>
<name>UVRB_BACAN</name>
<feature type="chain" id="PRO_0000227279" description="UvrABC system protein B">
    <location>
        <begin position="1"/>
        <end position="658"/>
    </location>
</feature>
<feature type="domain" description="Helicase ATP-binding" evidence="1">
    <location>
        <begin position="26"/>
        <end position="413"/>
    </location>
</feature>
<feature type="domain" description="Helicase C-terminal" evidence="1">
    <location>
        <begin position="430"/>
        <end position="596"/>
    </location>
</feature>
<feature type="domain" description="UVR" evidence="1">
    <location>
        <begin position="622"/>
        <end position="657"/>
    </location>
</feature>
<feature type="short sequence motif" description="Beta-hairpin">
    <location>
        <begin position="92"/>
        <end position="115"/>
    </location>
</feature>
<feature type="binding site" evidence="1">
    <location>
        <begin position="39"/>
        <end position="46"/>
    </location>
    <ligand>
        <name>ATP</name>
        <dbReference type="ChEBI" id="CHEBI:30616"/>
    </ligand>
</feature>
<comment type="function">
    <text evidence="1">The UvrABC repair system catalyzes the recognition and processing of DNA lesions. A damage recognition complex composed of 2 UvrA and 2 UvrB subunits scans DNA for abnormalities. Upon binding of the UvrA(2)B(2) complex to a putative damaged site, the DNA wraps around one UvrB monomer. DNA wrap is dependent on ATP binding by UvrB and probably causes local melting of the DNA helix, facilitating insertion of UvrB beta-hairpin between the DNA strands. Then UvrB probes one DNA strand for the presence of a lesion. If a lesion is found the UvrA subunits dissociate and the UvrB-DNA preincision complex is formed. This complex is subsequently bound by UvrC and the second UvrB is released. If no lesion is found, the DNA wraps around the other UvrB subunit that will check the other stand for damage.</text>
</comment>
<comment type="subunit">
    <text evidence="1">Forms a heterotetramer with UvrA during the search for lesions. Interacts with UvrC in an incision complex.</text>
</comment>
<comment type="subcellular location">
    <subcellularLocation>
        <location evidence="1">Cytoplasm</location>
    </subcellularLocation>
</comment>
<comment type="domain">
    <text evidence="1">The beta-hairpin motif is involved in DNA binding.</text>
</comment>
<comment type="similarity">
    <text evidence="1">Belongs to the UvrB family.</text>
</comment>
<organism>
    <name type="scientific">Bacillus anthracis</name>
    <dbReference type="NCBI Taxonomy" id="1392"/>
    <lineage>
        <taxon>Bacteria</taxon>
        <taxon>Bacillati</taxon>
        <taxon>Bacillota</taxon>
        <taxon>Bacilli</taxon>
        <taxon>Bacillales</taxon>
        <taxon>Bacillaceae</taxon>
        <taxon>Bacillus</taxon>
        <taxon>Bacillus cereus group</taxon>
    </lineage>
</organism>
<evidence type="ECO:0000255" key="1">
    <source>
        <dbReference type="HAMAP-Rule" id="MF_00204"/>
    </source>
</evidence>
<dbReference type="EMBL" id="AE016879">
    <property type="protein sequence ID" value="AAP29055.1"/>
    <property type="molecule type" value="Genomic_DNA"/>
</dbReference>
<dbReference type="EMBL" id="AE017334">
    <property type="protein sequence ID" value="AAT34532.1"/>
    <property type="molecule type" value="Genomic_DNA"/>
</dbReference>
<dbReference type="EMBL" id="AE017225">
    <property type="protein sequence ID" value="AAT57305.1"/>
    <property type="molecule type" value="Genomic_DNA"/>
</dbReference>
<dbReference type="RefSeq" id="NP_847569.1">
    <property type="nucleotide sequence ID" value="NC_003997.3"/>
</dbReference>
<dbReference type="RefSeq" id="WP_000441062.1">
    <property type="nucleotide sequence ID" value="NZ_WXXJ01000012.1"/>
</dbReference>
<dbReference type="RefSeq" id="YP_031255.1">
    <property type="nucleotide sequence ID" value="NC_005945.1"/>
</dbReference>
<dbReference type="SMR" id="Q81X47"/>
<dbReference type="STRING" id="261594.GBAA_5396"/>
<dbReference type="DNASU" id="1084964"/>
<dbReference type="GeneID" id="45024999"/>
<dbReference type="KEGG" id="ban:BA_5396"/>
<dbReference type="KEGG" id="bar:GBAA_5396"/>
<dbReference type="KEGG" id="bat:BAS5016"/>
<dbReference type="PATRIC" id="fig|198094.11.peg.5354"/>
<dbReference type="eggNOG" id="COG0556">
    <property type="taxonomic scope" value="Bacteria"/>
</dbReference>
<dbReference type="HOGENOM" id="CLU_009621_2_1_9"/>
<dbReference type="OMA" id="RYMHSEI"/>
<dbReference type="OrthoDB" id="9806651at2"/>
<dbReference type="Proteomes" id="UP000000427">
    <property type="component" value="Chromosome"/>
</dbReference>
<dbReference type="Proteomes" id="UP000000594">
    <property type="component" value="Chromosome"/>
</dbReference>
<dbReference type="GO" id="GO:0005737">
    <property type="term" value="C:cytoplasm"/>
    <property type="evidence" value="ECO:0007669"/>
    <property type="project" value="UniProtKB-SubCell"/>
</dbReference>
<dbReference type="GO" id="GO:0009380">
    <property type="term" value="C:excinuclease repair complex"/>
    <property type="evidence" value="ECO:0007669"/>
    <property type="project" value="InterPro"/>
</dbReference>
<dbReference type="GO" id="GO:0005524">
    <property type="term" value="F:ATP binding"/>
    <property type="evidence" value="ECO:0007669"/>
    <property type="project" value="UniProtKB-UniRule"/>
</dbReference>
<dbReference type="GO" id="GO:0016887">
    <property type="term" value="F:ATP hydrolysis activity"/>
    <property type="evidence" value="ECO:0007669"/>
    <property type="project" value="InterPro"/>
</dbReference>
<dbReference type="GO" id="GO:0003677">
    <property type="term" value="F:DNA binding"/>
    <property type="evidence" value="ECO:0007669"/>
    <property type="project" value="UniProtKB-UniRule"/>
</dbReference>
<dbReference type="GO" id="GO:0009381">
    <property type="term" value="F:excinuclease ABC activity"/>
    <property type="evidence" value="ECO:0007669"/>
    <property type="project" value="UniProtKB-UniRule"/>
</dbReference>
<dbReference type="GO" id="GO:0006289">
    <property type="term" value="P:nucleotide-excision repair"/>
    <property type="evidence" value="ECO:0007669"/>
    <property type="project" value="UniProtKB-UniRule"/>
</dbReference>
<dbReference type="GO" id="GO:0009432">
    <property type="term" value="P:SOS response"/>
    <property type="evidence" value="ECO:0007669"/>
    <property type="project" value="UniProtKB-UniRule"/>
</dbReference>
<dbReference type="CDD" id="cd17916">
    <property type="entry name" value="DEXHc_UvrB"/>
    <property type="match status" value="1"/>
</dbReference>
<dbReference type="CDD" id="cd18790">
    <property type="entry name" value="SF2_C_UvrB"/>
    <property type="match status" value="1"/>
</dbReference>
<dbReference type="Gene3D" id="6.10.140.240">
    <property type="match status" value="1"/>
</dbReference>
<dbReference type="Gene3D" id="3.40.50.300">
    <property type="entry name" value="P-loop containing nucleotide triphosphate hydrolases"/>
    <property type="match status" value="3"/>
</dbReference>
<dbReference type="Gene3D" id="4.10.860.10">
    <property type="entry name" value="UVR domain"/>
    <property type="match status" value="1"/>
</dbReference>
<dbReference type="HAMAP" id="MF_00204">
    <property type="entry name" value="UvrB"/>
    <property type="match status" value="1"/>
</dbReference>
<dbReference type="InterPro" id="IPR006935">
    <property type="entry name" value="Helicase/UvrB_N"/>
</dbReference>
<dbReference type="InterPro" id="IPR014001">
    <property type="entry name" value="Helicase_ATP-bd"/>
</dbReference>
<dbReference type="InterPro" id="IPR001650">
    <property type="entry name" value="Helicase_C-like"/>
</dbReference>
<dbReference type="InterPro" id="IPR027417">
    <property type="entry name" value="P-loop_NTPase"/>
</dbReference>
<dbReference type="InterPro" id="IPR001943">
    <property type="entry name" value="UVR_dom"/>
</dbReference>
<dbReference type="InterPro" id="IPR036876">
    <property type="entry name" value="UVR_dom_sf"/>
</dbReference>
<dbReference type="InterPro" id="IPR004807">
    <property type="entry name" value="UvrB"/>
</dbReference>
<dbReference type="InterPro" id="IPR041471">
    <property type="entry name" value="UvrB_inter"/>
</dbReference>
<dbReference type="InterPro" id="IPR024759">
    <property type="entry name" value="UvrB_YAD/RRR_dom"/>
</dbReference>
<dbReference type="NCBIfam" id="NF003673">
    <property type="entry name" value="PRK05298.1"/>
    <property type="match status" value="1"/>
</dbReference>
<dbReference type="NCBIfam" id="TIGR00631">
    <property type="entry name" value="uvrb"/>
    <property type="match status" value="1"/>
</dbReference>
<dbReference type="PANTHER" id="PTHR24029">
    <property type="entry name" value="UVRABC SYSTEM PROTEIN B"/>
    <property type="match status" value="1"/>
</dbReference>
<dbReference type="PANTHER" id="PTHR24029:SF0">
    <property type="entry name" value="UVRABC SYSTEM PROTEIN B"/>
    <property type="match status" value="1"/>
</dbReference>
<dbReference type="Pfam" id="PF00271">
    <property type="entry name" value="Helicase_C"/>
    <property type="match status" value="1"/>
</dbReference>
<dbReference type="Pfam" id="PF04851">
    <property type="entry name" value="ResIII"/>
    <property type="match status" value="1"/>
</dbReference>
<dbReference type="Pfam" id="PF02151">
    <property type="entry name" value="UVR"/>
    <property type="match status" value="1"/>
</dbReference>
<dbReference type="Pfam" id="PF12344">
    <property type="entry name" value="UvrB"/>
    <property type="match status" value="1"/>
</dbReference>
<dbReference type="Pfam" id="PF17757">
    <property type="entry name" value="UvrB_inter"/>
    <property type="match status" value="1"/>
</dbReference>
<dbReference type="SMART" id="SM00487">
    <property type="entry name" value="DEXDc"/>
    <property type="match status" value="1"/>
</dbReference>
<dbReference type="SMART" id="SM00490">
    <property type="entry name" value="HELICc"/>
    <property type="match status" value="1"/>
</dbReference>
<dbReference type="SUPFAM" id="SSF46600">
    <property type="entry name" value="C-terminal UvrC-binding domain of UvrB"/>
    <property type="match status" value="1"/>
</dbReference>
<dbReference type="SUPFAM" id="SSF52540">
    <property type="entry name" value="P-loop containing nucleoside triphosphate hydrolases"/>
    <property type="match status" value="2"/>
</dbReference>
<dbReference type="PROSITE" id="PS51192">
    <property type="entry name" value="HELICASE_ATP_BIND_1"/>
    <property type="match status" value="1"/>
</dbReference>
<dbReference type="PROSITE" id="PS51194">
    <property type="entry name" value="HELICASE_CTER"/>
    <property type="match status" value="1"/>
</dbReference>
<dbReference type="PROSITE" id="PS50151">
    <property type="entry name" value="UVR"/>
    <property type="match status" value="1"/>
</dbReference>
<protein>
    <recommendedName>
        <fullName evidence="1">UvrABC system protein B</fullName>
        <shortName evidence="1">Protein UvrB</shortName>
    </recommendedName>
    <alternativeName>
        <fullName evidence="1">Excinuclease ABC subunit B</fullName>
    </alternativeName>
</protein>
<keyword id="KW-0067">ATP-binding</keyword>
<keyword id="KW-0963">Cytoplasm</keyword>
<keyword id="KW-0227">DNA damage</keyword>
<keyword id="KW-0228">DNA excision</keyword>
<keyword id="KW-0234">DNA repair</keyword>
<keyword id="KW-0267">Excision nuclease</keyword>
<keyword id="KW-0547">Nucleotide-binding</keyword>
<keyword id="KW-1185">Reference proteome</keyword>
<keyword id="KW-0742">SOS response</keyword>
<gene>
    <name evidence="1" type="primary">uvrB</name>
    <name type="ordered locus">BA_5396</name>
    <name type="ordered locus">GBAA_5396</name>
    <name type="ordered locus">BAS5016</name>
</gene>
<reference key="1">
    <citation type="journal article" date="2003" name="Nature">
        <title>The genome sequence of Bacillus anthracis Ames and comparison to closely related bacteria.</title>
        <authorList>
            <person name="Read T.D."/>
            <person name="Peterson S.N."/>
            <person name="Tourasse N.J."/>
            <person name="Baillie L.W."/>
            <person name="Paulsen I.T."/>
            <person name="Nelson K.E."/>
            <person name="Tettelin H."/>
            <person name="Fouts D.E."/>
            <person name="Eisen J.A."/>
            <person name="Gill S.R."/>
            <person name="Holtzapple E.K."/>
            <person name="Okstad O.A."/>
            <person name="Helgason E."/>
            <person name="Rilstone J."/>
            <person name="Wu M."/>
            <person name="Kolonay J.F."/>
            <person name="Beanan M.J."/>
            <person name="Dodson R.J."/>
            <person name="Brinkac L.M."/>
            <person name="Gwinn M.L."/>
            <person name="DeBoy R.T."/>
            <person name="Madpu R."/>
            <person name="Daugherty S.C."/>
            <person name="Durkin A.S."/>
            <person name="Haft D.H."/>
            <person name="Nelson W.C."/>
            <person name="Peterson J.D."/>
            <person name="Pop M."/>
            <person name="Khouri H.M."/>
            <person name="Radune D."/>
            <person name="Benton J.L."/>
            <person name="Mahamoud Y."/>
            <person name="Jiang L."/>
            <person name="Hance I.R."/>
            <person name="Weidman J.F."/>
            <person name="Berry K.J."/>
            <person name="Plaut R.D."/>
            <person name="Wolf A.M."/>
            <person name="Watkins K.L."/>
            <person name="Nierman W.C."/>
            <person name="Hazen A."/>
            <person name="Cline R.T."/>
            <person name="Redmond C."/>
            <person name="Thwaite J.E."/>
            <person name="White O."/>
            <person name="Salzberg S.L."/>
            <person name="Thomason B."/>
            <person name="Friedlander A.M."/>
            <person name="Koehler T.M."/>
            <person name="Hanna P.C."/>
            <person name="Kolstoe A.-B."/>
            <person name="Fraser C.M."/>
        </authorList>
    </citation>
    <scope>NUCLEOTIDE SEQUENCE [LARGE SCALE GENOMIC DNA]</scope>
    <source>
        <strain>Ames / isolate Porton</strain>
    </source>
</reference>
<reference key="2">
    <citation type="journal article" date="2009" name="J. Bacteriol.">
        <title>The complete genome sequence of Bacillus anthracis Ames 'Ancestor'.</title>
        <authorList>
            <person name="Ravel J."/>
            <person name="Jiang L."/>
            <person name="Stanley S.T."/>
            <person name="Wilson M.R."/>
            <person name="Decker R.S."/>
            <person name="Read T.D."/>
            <person name="Worsham P."/>
            <person name="Keim P.S."/>
            <person name="Salzberg S.L."/>
            <person name="Fraser-Liggett C.M."/>
            <person name="Rasko D.A."/>
        </authorList>
    </citation>
    <scope>NUCLEOTIDE SEQUENCE [LARGE SCALE GENOMIC DNA]</scope>
    <source>
        <strain>Ames ancestor</strain>
    </source>
</reference>
<reference key="3">
    <citation type="submission" date="2004-01" db="EMBL/GenBank/DDBJ databases">
        <title>Complete genome sequence of Bacillus anthracis Sterne.</title>
        <authorList>
            <person name="Brettin T.S."/>
            <person name="Bruce D."/>
            <person name="Challacombe J.F."/>
            <person name="Gilna P."/>
            <person name="Han C."/>
            <person name="Hill K."/>
            <person name="Hitchcock P."/>
            <person name="Jackson P."/>
            <person name="Keim P."/>
            <person name="Longmire J."/>
            <person name="Lucas S."/>
            <person name="Okinaka R."/>
            <person name="Richardson P."/>
            <person name="Rubin E."/>
            <person name="Tice H."/>
        </authorList>
    </citation>
    <scope>NUCLEOTIDE SEQUENCE [LARGE SCALE GENOMIC DNA]</scope>
    <source>
        <strain>Sterne</strain>
    </source>
</reference>